<evidence type="ECO:0000255" key="1">
    <source>
        <dbReference type="HAMAP-Rule" id="MF_01201"/>
    </source>
</evidence>
<proteinExistence type="inferred from homology"/>
<keyword id="KW-0413">Isomerase</keyword>
<keyword id="KW-0663">Pyridoxal phosphate</keyword>
<sequence>MVTGWHRPTWIEIDRAAIRENIKNEQNKLPENVDLWAVVKANAYGHGIIEVARTAKEAGAKGFCVAILDEALALREAGFQDDFILVLGATRKEDANLAAKNHISLTVFREDWLEDLTLEAPLRIHLKVDSGMGRLGIRTTDEARRIETTIAKDNQLQLEGIYTHFATADQLETSYFEQQLAKFQTILTSLKNRPTYVHTANSAASLLQPQIGFDAIRFGISMYGLTPSTEIKTSLPFELKPALALYTEMVHVKELAPGDSVSYGATYTATEREWVATLPIGYADGLIRHYSGFHVLVDGELAPIIGRVCMDQTIIKLPREFQTGSKVTIIGTDHGNTITADDAAHYLDTINYEVTCLLNERIPRKYIH</sequence>
<reference key="1">
    <citation type="journal article" date="2012" name="BMC Genomics">
        <title>Comparative genomics and transcriptomics of lineages I, II, and III strains of Listeria monocytogenes.</title>
        <authorList>
            <person name="Hain T."/>
            <person name="Ghai R."/>
            <person name="Billion A."/>
            <person name="Kuenne C.T."/>
            <person name="Steinweg C."/>
            <person name="Izar B."/>
            <person name="Mohamed W."/>
            <person name="Mraheil M."/>
            <person name="Domann E."/>
            <person name="Schaffrath S."/>
            <person name="Karst U."/>
            <person name="Goesmann A."/>
            <person name="Oehm S."/>
            <person name="Puhler A."/>
            <person name="Merkl R."/>
            <person name="Vorwerk S."/>
            <person name="Glaser P."/>
            <person name="Garrido P."/>
            <person name="Rusniok C."/>
            <person name="Buchrieser C."/>
            <person name="Goebel W."/>
            <person name="Chakraborty T."/>
        </authorList>
    </citation>
    <scope>NUCLEOTIDE SEQUENCE [LARGE SCALE GENOMIC DNA]</scope>
    <source>
        <strain>CLIP80459</strain>
    </source>
</reference>
<accession>C1L1F6</accession>
<dbReference type="EC" id="5.1.1.1" evidence="1"/>
<dbReference type="EMBL" id="FM242711">
    <property type="protein sequence ID" value="CAS04671.1"/>
    <property type="molecule type" value="Genomic_DNA"/>
</dbReference>
<dbReference type="RefSeq" id="WP_003727109.1">
    <property type="nucleotide sequence ID" value="NC_012488.1"/>
</dbReference>
<dbReference type="SMR" id="C1L1F6"/>
<dbReference type="KEGG" id="lmc:Lm4b_00904"/>
<dbReference type="HOGENOM" id="CLU_028393_2_1_9"/>
<dbReference type="UniPathway" id="UPA00042">
    <property type="reaction ID" value="UER00497"/>
</dbReference>
<dbReference type="GO" id="GO:0005829">
    <property type="term" value="C:cytosol"/>
    <property type="evidence" value="ECO:0007669"/>
    <property type="project" value="TreeGrafter"/>
</dbReference>
<dbReference type="GO" id="GO:0008784">
    <property type="term" value="F:alanine racemase activity"/>
    <property type="evidence" value="ECO:0007669"/>
    <property type="project" value="UniProtKB-UniRule"/>
</dbReference>
<dbReference type="GO" id="GO:0030170">
    <property type="term" value="F:pyridoxal phosphate binding"/>
    <property type="evidence" value="ECO:0007669"/>
    <property type="project" value="UniProtKB-UniRule"/>
</dbReference>
<dbReference type="GO" id="GO:0030632">
    <property type="term" value="P:D-alanine biosynthetic process"/>
    <property type="evidence" value="ECO:0007669"/>
    <property type="project" value="UniProtKB-UniRule"/>
</dbReference>
<dbReference type="GO" id="GO:0009252">
    <property type="term" value="P:peptidoglycan biosynthetic process"/>
    <property type="evidence" value="ECO:0007669"/>
    <property type="project" value="TreeGrafter"/>
</dbReference>
<dbReference type="CDD" id="cd00430">
    <property type="entry name" value="PLPDE_III_AR"/>
    <property type="match status" value="1"/>
</dbReference>
<dbReference type="FunFam" id="2.40.37.10:FF:000006">
    <property type="entry name" value="Alanine racemase"/>
    <property type="match status" value="1"/>
</dbReference>
<dbReference type="FunFam" id="3.20.20.10:FF:000002">
    <property type="entry name" value="Alanine racemase"/>
    <property type="match status" value="1"/>
</dbReference>
<dbReference type="Gene3D" id="3.20.20.10">
    <property type="entry name" value="Alanine racemase"/>
    <property type="match status" value="1"/>
</dbReference>
<dbReference type="Gene3D" id="2.40.37.10">
    <property type="entry name" value="Lyase, Ornithine Decarboxylase, Chain A, domain 1"/>
    <property type="match status" value="1"/>
</dbReference>
<dbReference type="HAMAP" id="MF_01201">
    <property type="entry name" value="Ala_racemase"/>
    <property type="match status" value="1"/>
</dbReference>
<dbReference type="InterPro" id="IPR000821">
    <property type="entry name" value="Ala_racemase"/>
</dbReference>
<dbReference type="InterPro" id="IPR009006">
    <property type="entry name" value="Ala_racemase/Decarboxylase_C"/>
</dbReference>
<dbReference type="InterPro" id="IPR011079">
    <property type="entry name" value="Ala_racemase_C"/>
</dbReference>
<dbReference type="InterPro" id="IPR001608">
    <property type="entry name" value="Ala_racemase_N"/>
</dbReference>
<dbReference type="InterPro" id="IPR020622">
    <property type="entry name" value="Ala_racemase_pyridoxalP-BS"/>
</dbReference>
<dbReference type="InterPro" id="IPR029066">
    <property type="entry name" value="PLP-binding_barrel"/>
</dbReference>
<dbReference type="NCBIfam" id="TIGR00492">
    <property type="entry name" value="alr"/>
    <property type="match status" value="1"/>
</dbReference>
<dbReference type="PANTHER" id="PTHR30511">
    <property type="entry name" value="ALANINE RACEMASE"/>
    <property type="match status" value="1"/>
</dbReference>
<dbReference type="PANTHER" id="PTHR30511:SF0">
    <property type="entry name" value="ALANINE RACEMASE, CATABOLIC-RELATED"/>
    <property type="match status" value="1"/>
</dbReference>
<dbReference type="Pfam" id="PF00842">
    <property type="entry name" value="Ala_racemase_C"/>
    <property type="match status" value="1"/>
</dbReference>
<dbReference type="Pfam" id="PF01168">
    <property type="entry name" value="Ala_racemase_N"/>
    <property type="match status" value="1"/>
</dbReference>
<dbReference type="PRINTS" id="PR00992">
    <property type="entry name" value="ALARACEMASE"/>
</dbReference>
<dbReference type="SMART" id="SM01005">
    <property type="entry name" value="Ala_racemase_C"/>
    <property type="match status" value="1"/>
</dbReference>
<dbReference type="SUPFAM" id="SSF50621">
    <property type="entry name" value="Alanine racemase C-terminal domain-like"/>
    <property type="match status" value="1"/>
</dbReference>
<dbReference type="SUPFAM" id="SSF51419">
    <property type="entry name" value="PLP-binding barrel"/>
    <property type="match status" value="1"/>
</dbReference>
<dbReference type="PROSITE" id="PS00395">
    <property type="entry name" value="ALANINE_RACEMASE"/>
    <property type="match status" value="1"/>
</dbReference>
<comment type="function">
    <text evidence="1">Catalyzes the interconversion of L-alanine and D-alanine. May also act on other amino acids.</text>
</comment>
<comment type="catalytic activity">
    <reaction evidence="1">
        <text>L-alanine = D-alanine</text>
        <dbReference type="Rhea" id="RHEA:20249"/>
        <dbReference type="ChEBI" id="CHEBI:57416"/>
        <dbReference type="ChEBI" id="CHEBI:57972"/>
        <dbReference type="EC" id="5.1.1.1"/>
    </reaction>
</comment>
<comment type="cofactor">
    <cofactor evidence="1">
        <name>pyridoxal 5'-phosphate</name>
        <dbReference type="ChEBI" id="CHEBI:597326"/>
    </cofactor>
</comment>
<comment type="pathway">
    <text evidence="1">Amino-acid biosynthesis; D-alanine biosynthesis; D-alanine from L-alanine: step 1/1.</text>
</comment>
<comment type="similarity">
    <text evidence="1">Belongs to the alanine racemase family.</text>
</comment>
<organism>
    <name type="scientific">Listeria monocytogenes serotype 4b (strain CLIP80459)</name>
    <dbReference type="NCBI Taxonomy" id="568819"/>
    <lineage>
        <taxon>Bacteria</taxon>
        <taxon>Bacillati</taxon>
        <taxon>Bacillota</taxon>
        <taxon>Bacilli</taxon>
        <taxon>Bacillales</taxon>
        <taxon>Listeriaceae</taxon>
        <taxon>Listeria</taxon>
    </lineage>
</organism>
<name>ALR_LISMC</name>
<gene>
    <name type="primary">alr</name>
    <name type="ordered locus">Lm4b_00904</name>
</gene>
<feature type="chain" id="PRO_1000213836" description="Alanine racemase">
    <location>
        <begin position="1"/>
        <end position="368"/>
    </location>
</feature>
<feature type="active site" description="Proton acceptor; specific for D-alanine" evidence="1">
    <location>
        <position position="40"/>
    </location>
</feature>
<feature type="active site" description="Proton acceptor; specific for L-alanine" evidence="1">
    <location>
        <position position="263"/>
    </location>
</feature>
<feature type="binding site" evidence="1">
    <location>
        <position position="134"/>
    </location>
    <ligand>
        <name>substrate</name>
    </ligand>
</feature>
<feature type="binding site" evidence="1">
    <location>
        <position position="310"/>
    </location>
    <ligand>
        <name>substrate</name>
    </ligand>
</feature>
<feature type="modified residue" description="N6-(pyridoxal phosphate)lysine" evidence="1">
    <location>
        <position position="40"/>
    </location>
</feature>
<protein>
    <recommendedName>
        <fullName evidence="1">Alanine racemase</fullName>
        <ecNumber evidence="1">5.1.1.1</ecNumber>
    </recommendedName>
</protein>